<comment type="function">
    <text evidence="1">RNaseP catalyzes the removal of the 5'-leader sequence from pre-tRNA to produce the mature 5'-terminus. It can also cleave other RNA substrates such as 4.5S RNA. The protein component plays an auxiliary but essential role in vivo by binding to the 5'-leader sequence and broadening the substrate specificity of the ribozyme.</text>
</comment>
<comment type="catalytic activity">
    <reaction evidence="1">
        <text>Endonucleolytic cleavage of RNA, removing 5'-extranucleotides from tRNA precursor.</text>
        <dbReference type="EC" id="3.1.26.5"/>
    </reaction>
</comment>
<comment type="subunit">
    <text evidence="1">Consists of a catalytic RNA component (M1 or rnpB) and a protein subunit.</text>
</comment>
<comment type="similarity">
    <text evidence="1">Belongs to the RnpA family.</text>
</comment>
<feature type="chain" id="PRO_0000198437" description="Ribonuclease P protein component">
    <location>
        <begin position="1"/>
        <end position="114"/>
    </location>
</feature>
<accession>P59413</accession>
<organism>
    <name type="scientific">Buchnera aphidicola subsp. Baizongia pistaciae (strain Bp)</name>
    <dbReference type="NCBI Taxonomy" id="224915"/>
    <lineage>
        <taxon>Bacteria</taxon>
        <taxon>Pseudomonadati</taxon>
        <taxon>Pseudomonadota</taxon>
        <taxon>Gammaproteobacteria</taxon>
        <taxon>Enterobacterales</taxon>
        <taxon>Erwiniaceae</taxon>
        <taxon>Buchnera</taxon>
    </lineage>
</organism>
<sequence length="114" mass="13761">MIEFYFNKKRRLITPNDFNYVFKSPNVIRCKEITILGRLNLLSFSRLGISVSRKNVKYAYQRNKIKRLIRENFRIIQHRLVSSDFVVIVNSSSMQISFKLLAKKLENLWSYYYQ</sequence>
<gene>
    <name evidence="1" type="primary">rnpA</name>
    <name type="ordered locus">bbp_014</name>
</gene>
<dbReference type="EC" id="3.1.26.5" evidence="1"/>
<dbReference type="EMBL" id="AE016826">
    <property type="protein sequence ID" value="AAO26758.1"/>
    <property type="molecule type" value="Genomic_DNA"/>
</dbReference>
<dbReference type="RefSeq" id="WP_011091159.1">
    <property type="nucleotide sequence ID" value="NC_004545.1"/>
</dbReference>
<dbReference type="SMR" id="P59413"/>
<dbReference type="STRING" id="224915.bbp_014"/>
<dbReference type="KEGG" id="bab:bbp_014"/>
<dbReference type="eggNOG" id="COG0594">
    <property type="taxonomic scope" value="Bacteria"/>
</dbReference>
<dbReference type="HOGENOM" id="CLU_117179_11_0_6"/>
<dbReference type="OrthoDB" id="9796422at2"/>
<dbReference type="Proteomes" id="UP000000601">
    <property type="component" value="Chromosome"/>
</dbReference>
<dbReference type="GO" id="GO:0030677">
    <property type="term" value="C:ribonuclease P complex"/>
    <property type="evidence" value="ECO:0007669"/>
    <property type="project" value="TreeGrafter"/>
</dbReference>
<dbReference type="GO" id="GO:0042781">
    <property type="term" value="F:3'-tRNA processing endoribonuclease activity"/>
    <property type="evidence" value="ECO:0007669"/>
    <property type="project" value="TreeGrafter"/>
</dbReference>
<dbReference type="GO" id="GO:0004526">
    <property type="term" value="F:ribonuclease P activity"/>
    <property type="evidence" value="ECO:0007669"/>
    <property type="project" value="UniProtKB-UniRule"/>
</dbReference>
<dbReference type="GO" id="GO:0000049">
    <property type="term" value="F:tRNA binding"/>
    <property type="evidence" value="ECO:0007669"/>
    <property type="project" value="UniProtKB-UniRule"/>
</dbReference>
<dbReference type="GO" id="GO:0001682">
    <property type="term" value="P:tRNA 5'-leader removal"/>
    <property type="evidence" value="ECO:0007669"/>
    <property type="project" value="UniProtKB-UniRule"/>
</dbReference>
<dbReference type="Gene3D" id="3.30.230.10">
    <property type="match status" value="1"/>
</dbReference>
<dbReference type="HAMAP" id="MF_00227">
    <property type="entry name" value="RNase_P"/>
    <property type="match status" value="1"/>
</dbReference>
<dbReference type="InterPro" id="IPR020568">
    <property type="entry name" value="Ribosomal_Su5_D2-typ_SF"/>
</dbReference>
<dbReference type="InterPro" id="IPR014721">
    <property type="entry name" value="Ribsml_uS5_D2-typ_fold_subgr"/>
</dbReference>
<dbReference type="InterPro" id="IPR000100">
    <property type="entry name" value="RNase_P"/>
</dbReference>
<dbReference type="InterPro" id="IPR020539">
    <property type="entry name" value="RNase_P_CS"/>
</dbReference>
<dbReference type="NCBIfam" id="TIGR00188">
    <property type="entry name" value="rnpA"/>
    <property type="match status" value="1"/>
</dbReference>
<dbReference type="PANTHER" id="PTHR33992">
    <property type="entry name" value="RIBONUCLEASE P PROTEIN COMPONENT"/>
    <property type="match status" value="1"/>
</dbReference>
<dbReference type="PANTHER" id="PTHR33992:SF1">
    <property type="entry name" value="RIBONUCLEASE P PROTEIN COMPONENT"/>
    <property type="match status" value="1"/>
</dbReference>
<dbReference type="Pfam" id="PF00825">
    <property type="entry name" value="Ribonuclease_P"/>
    <property type="match status" value="1"/>
</dbReference>
<dbReference type="SUPFAM" id="SSF54211">
    <property type="entry name" value="Ribosomal protein S5 domain 2-like"/>
    <property type="match status" value="1"/>
</dbReference>
<dbReference type="PROSITE" id="PS00648">
    <property type="entry name" value="RIBONUCLEASE_P"/>
    <property type="match status" value="1"/>
</dbReference>
<proteinExistence type="inferred from homology"/>
<reference key="1">
    <citation type="journal article" date="2003" name="Proc. Natl. Acad. Sci. U.S.A.">
        <title>Reductive genome evolution in Buchnera aphidicola.</title>
        <authorList>
            <person name="van Ham R.C.H.J."/>
            <person name="Kamerbeek J."/>
            <person name="Palacios C."/>
            <person name="Rausell C."/>
            <person name="Abascal F."/>
            <person name="Bastolla U."/>
            <person name="Fernandez J.M."/>
            <person name="Jimenez L."/>
            <person name="Postigo M."/>
            <person name="Silva F.J."/>
            <person name="Tamames J."/>
            <person name="Viguera E."/>
            <person name="Latorre A."/>
            <person name="Valencia A."/>
            <person name="Moran F."/>
            <person name="Moya A."/>
        </authorList>
    </citation>
    <scope>NUCLEOTIDE SEQUENCE [LARGE SCALE GENOMIC DNA]</scope>
    <source>
        <strain>Bp</strain>
    </source>
</reference>
<name>RNPA_BUCBP</name>
<protein>
    <recommendedName>
        <fullName evidence="1">Ribonuclease P protein component</fullName>
        <shortName evidence="1">RNase P protein</shortName>
        <shortName evidence="1">RNaseP protein</shortName>
        <ecNumber evidence="1">3.1.26.5</ecNumber>
    </recommendedName>
    <alternativeName>
        <fullName evidence="1">Protein C5</fullName>
    </alternativeName>
</protein>
<keyword id="KW-0255">Endonuclease</keyword>
<keyword id="KW-0378">Hydrolase</keyword>
<keyword id="KW-0540">Nuclease</keyword>
<keyword id="KW-1185">Reference proteome</keyword>
<keyword id="KW-0694">RNA-binding</keyword>
<keyword id="KW-0819">tRNA processing</keyword>
<evidence type="ECO:0000255" key="1">
    <source>
        <dbReference type="HAMAP-Rule" id="MF_00227"/>
    </source>
</evidence>